<sequence>MALRYDGLDELPAACLSPCGPPNPAELYSEERRLALEELLAGGPGAFSAFLRRERLGRFLNPDEVRSILRAAERPGEEGAAAGAEDSFGSSHDCSSGTYFPEQSDLEPPLLELGWPAFYQGAYRGATRVEAHFQPRGAGAGGPYGCKDALRQQLRLAREVIAVVMDVFTDIDIFRDLQEISRKQGVAVYILLDQALLSQFLDMCMDLKVHPEEEKLMTVRTITGNIYYARSGTKIVGKVHEKFTLIDGIRVATGSYSFTWTDGKLNSSNLVILSGQVVEHFDLEFRILYAQSKPISSKLLSSFRISGRFDHLVDQKPLSKELTLGNLLRLRLARLSSTPRKVELGGEEGRAEAVCGASKTSTISEEDYFSSRKDRLEGRRVTDAATQTEPGETPAVSMSDVGTQASAATACTGTQTTVATRVVSSQTVVPTTSATTQTDVDEGVLASPGSQSKEGSPVSKMSVSRSSSLRSSSSLSSQGSVASSIGSQTSFRSTDFATPGPPKYQSTPHFDLCFRDSLRNLNKERQFHFAGIRSRLNHMLAMLSRKTFLTENYLSFNSGSFARSSANLLAVREIMLYPSYQ</sequence>
<gene>
    <name evidence="1" type="primary">FAM83D</name>
</gene>
<feature type="chain" id="PRO_0000365008" description="Protein FAM83D">
    <location>
        <begin position="1"/>
        <end position="581"/>
    </location>
</feature>
<feature type="region of interest" description="DUF1669" evidence="1">
    <location>
        <begin position="1"/>
        <end position="297"/>
    </location>
</feature>
<feature type="region of interest" description="Disordered" evidence="2">
    <location>
        <begin position="75"/>
        <end position="101"/>
    </location>
</feature>
<feature type="region of interest" description="Required for interaction with KIF22 and function in chromosome congression" evidence="1">
    <location>
        <begin position="338"/>
        <end position="581"/>
    </location>
</feature>
<feature type="region of interest" description="Disordered" evidence="2">
    <location>
        <begin position="366"/>
        <end position="401"/>
    </location>
</feature>
<feature type="region of interest" description="Disordered" evidence="2">
    <location>
        <begin position="426"/>
        <end position="503"/>
    </location>
</feature>
<feature type="compositionally biased region" description="Polar residues" evidence="2">
    <location>
        <begin position="88"/>
        <end position="98"/>
    </location>
</feature>
<feature type="compositionally biased region" description="Basic and acidic residues" evidence="2">
    <location>
        <begin position="369"/>
        <end position="382"/>
    </location>
</feature>
<feature type="compositionally biased region" description="Low complexity" evidence="2">
    <location>
        <begin position="426"/>
        <end position="438"/>
    </location>
</feature>
<feature type="compositionally biased region" description="Low complexity" evidence="2">
    <location>
        <begin position="462"/>
        <end position="488"/>
    </location>
</feature>
<feature type="modified residue" description="Phosphoserine" evidence="1">
    <location>
        <position position="296"/>
    </location>
</feature>
<feature type="modified residue" description="Phosphoserine" evidence="1">
    <location>
        <position position="456"/>
    </location>
</feature>
<feature type="modified residue" description="Phosphothreonine" evidence="1">
    <location>
        <position position="507"/>
    </location>
</feature>
<name>FA83D_BOVIN</name>
<protein>
    <recommendedName>
        <fullName evidence="3">Protein FAM83D</fullName>
    </recommendedName>
</protein>
<proteinExistence type="evidence at transcript level"/>
<comment type="function">
    <text evidence="1">Through the degradation of FBXW7, may act indirectly on the expression and downstream signaling of MTOR, JUN and MYC (By similarity). May play also a role in cell proliferation through activation of the ERK1/ERK2 signaling cascade (By similarity). May also be important for proper chromosome congression and alignment during mitosis through its interaction with KIF22 (By similarity).</text>
</comment>
<comment type="subunit">
    <text evidence="1">Interacts with FBXW7; promotes FBXW7 degradation (By similarity). May interact with RAF1 (By similarity). Interacts with KIF22; recruits KIF22 to mitotic spindle microtubules (By similarity). Interacts (via C-terminus) with DYNLL1 (By similarity). Interacts with HMMR (By similarity). Directly interacts (via DUF1669) with CSNK1A1 and CSNK1A1L (By similarity).</text>
</comment>
<comment type="subcellular location">
    <subcellularLocation>
        <location evidence="1">Cytoplasm</location>
    </subcellularLocation>
    <subcellularLocation>
        <location evidence="1">Cytoplasm</location>
        <location evidence="1">Cytoskeleton</location>
        <location evidence="1">Spindle</location>
    </subcellularLocation>
    <subcellularLocation>
        <location evidence="1">Cytoplasm</location>
        <location evidence="1">Cytoskeleton</location>
        <location evidence="1">Spindle pole</location>
    </subcellularLocation>
    <text evidence="1">Primarily cytoplasmic during interphase, but at prophase, associates with spindle microtubules, with a clear concentration toward the spindle poles. It persists on spindle microtubules through metaphase and anaphase.</text>
</comment>
<comment type="domain">
    <text evidence="1">All members of the FAM83 family of proteins share a conserved N-terminal DUF1669 (domain of unknown function 1669) domain of about 300 amino acids. This domain mediates the interaction with casein kinase 1 (CK1) isoforms. Therefore, it has been proposed to rename DUF1669 the polypeptide anchor of CK1 domain.</text>
</comment>
<comment type="PTM">
    <text evidence="1">Phosphorylated during mitosis.</text>
</comment>
<comment type="similarity">
    <text evidence="3">Belongs to the FAM83 family.</text>
</comment>
<organism>
    <name type="scientific">Bos taurus</name>
    <name type="common">Bovine</name>
    <dbReference type="NCBI Taxonomy" id="9913"/>
    <lineage>
        <taxon>Eukaryota</taxon>
        <taxon>Metazoa</taxon>
        <taxon>Chordata</taxon>
        <taxon>Craniata</taxon>
        <taxon>Vertebrata</taxon>
        <taxon>Euteleostomi</taxon>
        <taxon>Mammalia</taxon>
        <taxon>Eutheria</taxon>
        <taxon>Laurasiatheria</taxon>
        <taxon>Artiodactyla</taxon>
        <taxon>Ruminantia</taxon>
        <taxon>Pecora</taxon>
        <taxon>Bovidae</taxon>
        <taxon>Bovinae</taxon>
        <taxon>Bos</taxon>
    </lineage>
</organism>
<accession>A3KN19</accession>
<reference key="1">
    <citation type="submission" date="2007-02" db="EMBL/GenBank/DDBJ databases">
        <authorList>
            <consortium name="NIH - Mammalian Gene Collection (MGC) project"/>
        </authorList>
    </citation>
    <scope>NUCLEOTIDE SEQUENCE [LARGE SCALE MRNA]</scope>
    <source>
        <strain>Hereford</strain>
        <tissue>Thymus</tissue>
    </source>
</reference>
<dbReference type="EMBL" id="BC133491">
    <property type="protein sequence ID" value="AAI33492.1"/>
    <property type="molecule type" value="mRNA"/>
</dbReference>
<dbReference type="RefSeq" id="NP_001076862.1">
    <property type="nucleotide sequence ID" value="NM_001083393.1"/>
</dbReference>
<dbReference type="SMR" id="A3KN19"/>
<dbReference type="FunCoup" id="A3KN19">
    <property type="interactions" value="490"/>
</dbReference>
<dbReference type="STRING" id="9913.ENSBTAP00000000862"/>
<dbReference type="PaxDb" id="9913-ENSBTAP00000000862"/>
<dbReference type="GeneID" id="508561"/>
<dbReference type="KEGG" id="bta:508561"/>
<dbReference type="CTD" id="81610"/>
<dbReference type="eggNOG" id="ENOG502RC3Z">
    <property type="taxonomic scope" value="Eukaryota"/>
</dbReference>
<dbReference type="InParanoid" id="A3KN19"/>
<dbReference type="OrthoDB" id="9882762at2759"/>
<dbReference type="Proteomes" id="UP000009136">
    <property type="component" value="Unplaced"/>
</dbReference>
<dbReference type="GO" id="GO:0005737">
    <property type="term" value="C:cytoplasm"/>
    <property type="evidence" value="ECO:0000250"/>
    <property type="project" value="UniProtKB"/>
</dbReference>
<dbReference type="GO" id="GO:0005829">
    <property type="term" value="C:cytosol"/>
    <property type="evidence" value="ECO:0000318"/>
    <property type="project" value="GO_Central"/>
</dbReference>
<dbReference type="GO" id="GO:0097431">
    <property type="term" value="C:mitotic spindle pole"/>
    <property type="evidence" value="ECO:0000250"/>
    <property type="project" value="UniProtKB"/>
</dbReference>
<dbReference type="GO" id="GO:0008017">
    <property type="term" value="F:microtubule binding"/>
    <property type="evidence" value="ECO:0000250"/>
    <property type="project" value="UniProtKB"/>
</dbReference>
<dbReference type="GO" id="GO:0019901">
    <property type="term" value="F:protein kinase binding"/>
    <property type="evidence" value="ECO:0000318"/>
    <property type="project" value="GO_Central"/>
</dbReference>
<dbReference type="GO" id="GO:0051301">
    <property type="term" value="P:cell division"/>
    <property type="evidence" value="ECO:0007669"/>
    <property type="project" value="UniProtKB-KW"/>
</dbReference>
<dbReference type="GO" id="GO:0016477">
    <property type="term" value="P:cell migration"/>
    <property type="evidence" value="ECO:0000250"/>
    <property type="project" value="UniProtKB"/>
</dbReference>
<dbReference type="GO" id="GO:0008283">
    <property type="term" value="P:cell population proliferation"/>
    <property type="evidence" value="ECO:0000250"/>
    <property type="project" value="UniProtKB"/>
</dbReference>
<dbReference type="GO" id="GO:0001837">
    <property type="term" value="P:epithelial to mesenchymal transition"/>
    <property type="evidence" value="ECO:0000250"/>
    <property type="project" value="UniProtKB"/>
</dbReference>
<dbReference type="GO" id="GO:0051310">
    <property type="term" value="P:metaphase chromosome alignment"/>
    <property type="evidence" value="ECO:0000250"/>
    <property type="project" value="UniProtKB"/>
</dbReference>
<dbReference type="GO" id="GO:1902808">
    <property type="term" value="P:positive regulation of cell cycle G1/S phase transition"/>
    <property type="evidence" value="ECO:0000250"/>
    <property type="project" value="UniProtKB"/>
</dbReference>
<dbReference type="GO" id="GO:1902480">
    <property type="term" value="P:protein localization to mitotic spindle"/>
    <property type="evidence" value="ECO:0000250"/>
    <property type="project" value="UniProtKB"/>
</dbReference>
<dbReference type="GO" id="GO:0070372">
    <property type="term" value="P:regulation of ERK1 and ERK2 cascade"/>
    <property type="evidence" value="ECO:0000250"/>
    <property type="project" value="UniProtKB"/>
</dbReference>
<dbReference type="GO" id="GO:0042176">
    <property type="term" value="P:regulation of protein catabolic process"/>
    <property type="evidence" value="ECO:0000250"/>
    <property type="project" value="UniProtKB"/>
</dbReference>
<dbReference type="GO" id="GO:0032006">
    <property type="term" value="P:regulation of TOR signaling"/>
    <property type="evidence" value="ECO:0000250"/>
    <property type="project" value="UniProtKB"/>
</dbReference>
<dbReference type="GO" id="GO:0007165">
    <property type="term" value="P:signal transduction"/>
    <property type="evidence" value="ECO:0000318"/>
    <property type="project" value="GO_Central"/>
</dbReference>
<dbReference type="FunFam" id="3.30.870.10:FF:000004">
    <property type="entry name" value="protein FAM83H isoform X2"/>
    <property type="match status" value="1"/>
</dbReference>
<dbReference type="Gene3D" id="3.30.870.10">
    <property type="entry name" value="Endonuclease Chain A"/>
    <property type="match status" value="1"/>
</dbReference>
<dbReference type="InterPro" id="IPR050944">
    <property type="entry name" value="FAM83"/>
</dbReference>
<dbReference type="InterPro" id="IPR012461">
    <property type="entry name" value="SACK1"/>
</dbReference>
<dbReference type="PANTHER" id="PTHR16181">
    <property type="entry name" value="PROTEIN FAM83A-RELATED"/>
    <property type="match status" value="1"/>
</dbReference>
<dbReference type="PANTHER" id="PTHR16181:SF29">
    <property type="entry name" value="PROTEIN FAM83A-RELATED"/>
    <property type="match status" value="1"/>
</dbReference>
<dbReference type="Pfam" id="PF07894">
    <property type="entry name" value="SACK1"/>
    <property type="match status" value="1"/>
</dbReference>
<dbReference type="SUPFAM" id="SSF56024">
    <property type="entry name" value="Phospholipase D/nuclease"/>
    <property type="match status" value="1"/>
</dbReference>
<evidence type="ECO:0000250" key="1">
    <source>
        <dbReference type="UniProtKB" id="Q9H4H8"/>
    </source>
</evidence>
<evidence type="ECO:0000256" key="2">
    <source>
        <dbReference type="SAM" id="MobiDB-lite"/>
    </source>
</evidence>
<evidence type="ECO:0000305" key="3"/>
<keyword id="KW-0131">Cell cycle</keyword>
<keyword id="KW-0132">Cell division</keyword>
<keyword id="KW-0963">Cytoplasm</keyword>
<keyword id="KW-0206">Cytoskeleton</keyword>
<keyword id="KW-0498">Mitosis</keyword>
<keyword id="KW-0597">Phosphoprotein</keyword>
<keyword id="KW-0656">Proto-oncogene</keyword>
<keyword id="KW-1185">Reference proteome</keyword>